<sequence length="587" mass="66981">MATAAYEQLKLHITPEKFYVEACDDGADDVLTIDRVSTEVTLAVKKDVPPSAVTRPIFGILGTIHLVAGNYLIVITKKIKVGEFFSHVIWKATDFDVLSYKKTMLHLTDIQLQDNKTFLAMLNHVLNVDGFYFSTTYDLTHTLQRLSNTSPEFQEMSLLERADQRFVWNGHLLRELSAQPEVHRFALPVLHGFITMHSCSINGKYFDWILISRRSCFRAGVRYYVRGIDSEGHAANFVETEQIVHYNGSKASFVQTRGSIPVFWSQRPNLKYKPLPQISKVANHMDGFQRHFDSQVIIYGKQVIINLINQKGSEKPLEQTFATMVSSLGSGMMRYIAFDFHKECKNMRWDRLSILLDQVAEMQDELSYFLVDSAGQVVANQEGVFRSNCMDCLDRTNVIQSLLARRSLQAQLQRLGVLHVGQKLEEQDEFEKIYKNAWADNANACAKQYAGTGALKTDFTRTGKRTHLGLIMDGWNSMIRYYKNNFSDGFRQDSIDLFLGNYSVDELESHSPLSVPRDWKFLALPIIMVVAFSMCIICLLMAGDTWTETLAYVLFWGVASIGTFFIILYNGKDFVDAPRLVQKEKID</sequence>
<accession>Q5R921</accession>
<keyword id="KW-0007">Acetylation</keyword>
<keyword id="KW-0256">Endoplasmic reticulum</keyword>
<keyword id="KW-0333">Golgi apparatus</keyword>
<keyword id="KW-0378">Hydrolase</keyword>
<keyword id="KW-0443">Lipid metabolism</keyword>
<keyword id="KW-0472">Membrane</keyword>
<keyword id="KW-1185">Reference proteome</keyword>
<keyword id="KW-0812">Transmembrane</keyword>
<keyword id="KW-1133">Transmembrane helix</keyword>
<name>SAC1_PONAB</name>
<gene>
    <name type="primary">SACM1L</name>
    <name evidence="1" type="synonym">SAC1</name>
</gene>
<organism>
    <name type="scientific">Pongo abelii</name>
    <name type="common">Sumatran orangutan</name>
    <name type="synonym">Pongo pygmaeus abelii</name>
    <dbReference type="NCBI Taxonomy" id="9601"/>
    <lineage>
        <taxon>Eukaryota</taxon>
        <taxon>Metazoa</taxon>
        <taxon>Chordata</taxon>
        <taxon>Craniata</taxon>
        <taxon>Vertebrata</taxon>
        <taxon>Euteleostomi</taxon>
        <taxon>Mammalia</taxon>
        <taxon>Eutheria</taxon>
        <taxon>Euarchontoglires</taxon>
        <taxon>Primates</taxon>
        <taxon>Haplorrhini</taxon>
        <taxon>Catarrhini</taxon>
        <taxon>Hominidae</taxon>
        <taxon>Pongo</taxon>
    </lineage>
</organism>
<feature type="chain" id="PRO_0000317173" description="Phosphatidylinositol-3-phosphatase SAC1">
    <location>
        <begin position="1"/>
        <end position="587"/>
    </location>
</feature>
<feature type="topological domain" description="Cytoplasmic" evidence="1">
    <location>
        <begin position="1"/>
        <end position="520"/>
    </location>
</feature>
<feature type="transmembrane region" description="Helical" evidence="3">
    <location>
        <begin position="521"/>
        <end position="541"/>
    </location>
</feature>
<feature type="topological domain" description="Lumenal" evidence="1">
    <location>
        <begin position="542"/>
        <end position="548"/>
    </location>
</feature>
<feature type="transmembrane region" description="Helical" evidence="3">
    <location>
        <begin position="549"/>
        <end position="569"/>
    </location>
</feature>
<feature type="topological domain" description="Cytoplasmic" evidence="1">
    <location>
        <begin position="570"/>
        <end position="587"/>
    </location>
</feature>
<feature type="domain" description="SAC" evidence="4">
    <location>
        <begin position="122"/>
        <end position="451"/>
    </location>
</feature>
<feature type="region of interest" description="Essential for phosphatidylinositol-4-phosphate phosphatase activity" evidence="2">
    <location>
        <begin position="452"/>
        <end position="587"/>
    </location>
</feature>
<feature type="modified residue" description="N6-acetyllysine" evidence="2">
    <location>
        <position position="456"/>
    </location>
</feature>
<protein>
    <recommendedName>
        <fullName>Phosphatidylinositol-3-phosphatase SAC1</fullName>
        <ecNumber evidence="1">3.1.3.64</ecNumber>
    </recommendedName>
    <alternativeName>
        <fullName evidence="1">Phosphatidylinositol-4-phosphate phosphatase</fullName>
    </alternativeName>
    <alternativeName>
        <fullName>Suppressor of actin mutations 1-like protein</fullName>
    </alternativeName>
</protein>
<comment type="function">
    <text evidence="1 2">Phosphoinositide phosphatase which catalyzes the hydrolysis of phosphatidylinositol 4-phosphate (PtdIns(4)P), phosphatidylinositol 3-phosphate (PtdIns(3)P) and has low activity towards phosphatidylinositol-3,5-bisphosphate (PtdIns(3,5)P2) (By similarity). Shows a very robust PtdIns(4)P phosphatase activity when it binds PtdIns(4)P in a 'cis' configuration in the cellular environment, with much less activity seen when it binds PtdIns(4)P in 'trans' configuration (By similarity). PtdIns(4)P phosphatase activity (when it binds PtdIns(4)P in 'trans' configuration) is enhanced in the presence of PLEKHA3 (By similarity).</text>
</comment>
<comment type="catalytic activity">
    <reaction evidence="1">
        <text>a 1,2-diacyl-sn-glycero-3-phospho-(1D-myo-inositol-3-phosphate) + H2O = a 1,2-diacyl-sn-glycero-3-phospho-(1D-myo-inositol) + phosphate</text>
        <dbReference type="Rhea" id="RHEA:12316"/>
        <dbReference type="ChEBI" id="CHEBI:15377"/>
        <dbReference type="ChEBI" id="CHEBI:43474"/>
        <dbReference type="ChEBI" id="CHEBI:57880"/>
        <dbReference type="ChEBI" id="CHEBI:58088"/>
        <dbReference type="EC" id="3.1.3.64"/>
    </reaction>
    <physiologicalReaction direction="left-to-right" evidence="1">
        <dbReference type="Rhea" id="RHEA:12317"/>
    </physiologicalReaction>
</comment>
<comment type="catalytic activity">
    <reaction evidence="1">
        <text>a 1,2-diacyl-sn-glycero-3-phospho-(1D-myo-inositol 4-phosphate) + H2O = a 1,2-diacyl-sn-glycero-3-phospho-(1D-myo-inositol) + phosphate</text>
        <dbReference type="Rhea" id="RHEA:55652"/>
        <dbReference type="ChEBI" id="CHEBI:15377"/>
        <dbReference type="ChEBI" id="CHEBI:43474"/>
        <dbReference type="ChEBI" id="CHEBI:57880"/>
        <dbReference type="ChEBI" id="CHEBI:58178"/>
    </reaction>
    <physiologicalReaction direction="left-to-right" evidence="1">
        <dbReference type="Rhea" id="RHEA:55653"/>
    </physiologicalReaction>
</comment>
<comment type="subunit">
    <text evidence="2">Interacts with TMEM39A (By similarity). Interacts with SEC23A and SEC24A; this interaction is reduced in the absence of TMEM39A (By similarity). Interacts with PLEKHA3 and VAPA and/or VAPB to form a ternary complex (By similarity).</text>
</comment>
<comment type="subcellular location">
    <subcellularLocation>
        <location evidence="1">Endoplasmic reticulum membrane</location>
        <topology evidence="3">Multi-pass membrane protein</topology>
    </subcellularLocation>
    <subcellularLocation>
        <location evidence="2">Golgi apparatus membrane</location>
        <topology evidence="3">Multi-pass membrane protein</topology>
    </subcellularLocation>
    <text evidence="2">Trafficking between the ER and Golgi is regulated by nutrient status and by TMEM39A. Localizes to endoplasmic reticulum-plasma membrane contact sites (EPCS) in the presence of phosphatidylinositol-4,5-bisphosphate.</text>
</comment>
<proteinExistence type="evidence at transcript level"/>
<dbReference type="EC" id="3.1.3.64" evidence="1"/>
<dbReference type="EMBL" id="CR859575">
    <property type="protein sequence ID" value="CAH91739.1"/>
    <property type="molecule type" value="mRNA"/>
</dbReference>
<dbReference type="RefSeq" id="NP_001126010.1">
    <property type="nucleotide sequence ID" value="NM_001132538.1"/>
</dbReference>
<dbReference type="SMR" id="Q5R921"/>
<dbReference type="FunCoup" id="Q5R921">
    <property type="interactions" value="3995"/>
</dbReference>
<dbReference type="STRING" id="9601.ENSPPYP00000015596"/>
<dbReference type="Ensembl" id="ENSPPYT00000016217.3">
    <property type="protein sequence ID" value="ENSPPYP00000015596.2"/>
    <property type="gene ID" value="ENSPPYG00000013944.3"/>
</dbReference>
<dbReference type="GeneID" id="100172954"/>
<dbReference type="KEGG" id="pon:100172954"/>
<dbReference type="CTD" id="22908"/>
<dbReference type="eggNOG" id="KOG1889">
    <property type="taxonomic scope" value="Eukaryota"/>
</dbReference>
<dbReference type="GeneTree" id="ENSGT00940000155579"/>
<dbReference type="HOGENOM" id="CLU_003016_7_4_1"/>
<dbReference type="InParanoid" id="Q5R921"/>
<dbReference type="OMA" id="ITKAQPV"/>
<dbReference type="OrthoDB" id="405996at2759"/>
<dbReference type="TreeFam" id="TF313543"/>
<dbReference type="Proteomes" id="UP000001595">
    <property type="component" value="Chromosome 3"/>
</dbReference>
<dbReference type="GO" id="GO:0032281">
    <property type="term" value="C:AMPA glutamate receptor complex"/>
    <property type="evidence" value="ECO:0007669"/>
    <property type="project" value="Ensembl"/>
</dbReference>
<dbReference type="GO" id="GO:0005789">
    <property type="term" value="C:endoplasmic reticulum membrane"/>
    <property type="evidence" value="ECO:0000250"/>
    <property type="project" value="UniProtKB"/>
</dbReference>
<dbReference type="GO" id="GO:0140268">
    <property type="term" value="C:endoplasmic reticulum-plasma membrane contact site"/>
    <property type="evidence" value="ECO:0000250"/>
    <property type="project" value="UniProtKB"/>
</dbReference>
<dbReference type="GO" id="GO:0098978">
    <property type="term" value="C:glutamatergic synapse"/>
    <property type="evidence" value="ECO:0007669"/>
    <property type="project" value="Ensembl"/>
</dbReference>
<dbReference type="GO" id="GO:0005794">
    <property type="term" value="C:Golgi apparatus"/>
    <property type="evidence" value="ECO:0000250"/>
    <property type="project" value="UniProtKB"/>
</dbReference>
<dbReference type="GO" id="GO:0000139">
    <property type="term" value="C:Golgi membrane"/>
    <property type="evidence" value="ECO:0000250"/>
    <property type="project" value="UniProtKB"/>
</dbReference>
<dbReference type="GO" id="GO:0016791">
    <property type="term" value="F:phosphatase activity"/>
    <property type="evidence" value="ECO:0000250"/>
    <property type="project" value="UniProtKB"/>
</dbReference>
<dbReference type="GO" id="GO:0004438">
    <property type="term" value="F:phosphatidylinositol-3-phosphate phosphatase activity"/>
    <property type="evidence" value="ECO:0007669"/>
    <property type="project" value="UniProtKB-EC"/>
</dbReference>
<dbReference type="GO" id="GO:0043812">
    <property type="term" value="F:phosphatidylinositol-4-phosphate phosphatase activity"/>
    <property type="evidence" value="ECO:0000250"/>
    <property type="project" value="UniProtKB"/>
</dbReference>
<dbReference type="GO" id="GO:0098967">
    <property type="term" value="P:exocytic insertion of neurotransmitter receptor to postsynaptic membrane"/>
    <property type="evidence" value="ECO:0007669"/>
    <property type="project" value="Ensembl"/>
</dbReference>
<dbReference type="GO" id="GO:0006661">
    <property type="term" value="P:phosphatidylinositol biosynthetic process"/>
    <property type="evidence" value="ECO:0007669"/>
    <property type="project" value="UniProtKB-ARBA"/>
</dbReference>
<dbReference type="GO" id="GO:0046856">
    <property type="term" value="P:phosphatidylinositol dephosphorylation"/>
    <property type="evidence" value="ECO:0000250"/>
    <property type="project" value="UniProtKB"/>
</dbReference>
<dbReference type="GO" id="GO:0099003">
    <property type="term" value="P:vesicle-mediated transport in synapse"/>
    <property type="evidence" value="ECO:0007669"/>
    <property type="project" value="Ensembl"/>
</dbReference>
<dbReference type="InterPro" id="IPR002013">
    <property type="entry name" value="SAC_dom"/>
</dbReference>
<dbReference type="PANTHER" id="PTHR45662">
    <property type="entry name" value="PHOSPHATIDYLINOSITIDE PHOSPHATASE SAC1"/>
    <property type="match status" value="1"/>
</dbReference>
<dbReference type="PANTHER" id="PTHR45662:SF2">
    <property type="entry name" value="PHOSPHATIDYLINOSITOL-3-PHOSPHATASE SAC1"/>
    <property type="match status" value="1"/>
</dbReference>
<dbReference type="Pfam" id="PF02383">
    <property type="entry name" value="Syja_N"/>
    <property type="match status" value="1"/>
</dbReference>
<dbReference type="PROSITE" id="PS50275">
    <property type="entry name" value="SAC"/>
    <property type="match status" value="1"/>
</dbReference>
<evidence type="ECO:0000250" key="1">
    <source>
        <dbReference type="UniProtKB" id="Q9ES21"/>
    </source>
</evidence>
<evidence type="ECO:0000250" key="2">
    <source>
        <dbReference type="UniProtKB" id="Q9NTJ5"/>
    </source>
</evidence>
<evidence type="ECO:0000255" key="3"/>
<evidence type="ECO:0000255" key="4">
    <source>
        <dbReference type="PROSITE-ProRule" id="PRU00183"/>
    </source>
</evidence>
<reference key="1">
    <citation type="submission" date="2004-11" db="EMBL/GenBank/DDBJ databases">
        <authorList>
            <consortium name="The German cDNA consortium"/>
        </authorList>
    </citation>
    <scope>NUCLEOTIDE SEQUENCE [LARGE SCALE MRNA]</scope>
    <source>
        <tissue>Brain cortex</tissue>
    </source>
</reference>